<comment type="function">
    <text>Involved in a secretory pathway responsible for the surface presentation of determinants needed for the entry of Salmonella species into mammalian cells.</text>
</comment>
<comment type="interaction">
    <interactant intactId="EBI-15880102">
        <id>P40700</id>
    </interactant>
    <interactant intactId="EBI-15880134">
        <id>P40701</id>
        <label>spaR</label>
    </interactant>
    <organismsDiffer>false</organismsDiffer>
    <experiments>2</experiments>
</comment>
<comment type="subcellular location">
    <subcellularLocation>
        <location evidence="2">Cell membrane</location>
        <topology evidence="2">Multi-pass membrane protein</topology>
    </subcellularLocation>
</comment>
<comment type="similarity">
    <text evidence="2">Belongs to the FliP/MopC/SpaP family.</text>
</comment>
<protein>
    <recommendedName>
        <fullName>Surface presentation of antigens protein SpaP</fullName>
    </recommendedName>
</protein>
<feature type="chain" id="PRO_0000191992" description="Surface presentation of antigens protein SpaP">
    <location>
        <begin position="1"/>
        <end position="224"/>
    </location>
</feature>
<feature type="transmembrane region" description="Helical" evidence="1">
    <location>
        <begin position="8"/>
        <end position="28"/>
    </location>
</feature>
<feature type="transmembrane region" description="Helical" evidence="1">
    <location>
        <begin position="55"/>
        <end position="75"/>
    </location>
</feature>
<feature type="transmembrane region" description="Helical" evidence="1">
    <location>
        <begin position="161"/>
        <end position="181"/>
    </location>
</feature>
<feature type="transmembrane region" description="Helical" evidence="1">
    <location>
        <begin position="185"/>
        <end position="205"/>
    </location>
</feature>
<evidence type="ECO:0000255" key="1"/>
<evidence type="ECO:0000305" key="2"/>
<accession>P40700</accession>
<name>SPAP_SALTY</name>
<dbReference type="EMBL" id="X73525">
    <property type="protein sequence ID" value="CAA51925.1"/>
    <property type="molecule type" value="Genomic_DNA"/>
</dbReference>
<dbReference type="EMBL" id="AE006468">
    <property type="protein sequence ID" value="AAL21770.1"/>
    <property type="molecule type" value="Genomic_DNA"/>
</dbReference>
<dbReference type="PIR" id="S37308">
    <property type="entry name" value="S37308"/>
</dbReference>
<dbReference type="RefSeq" id="NP_461811.1">
    <property type="nucleotide sequence ID" value="NC_003197.2"/>
</dbReference>
<dbReference type="RefSeq" id="WP_000526016.1">
    <property type="nucleotide sequence ID" value="NC_003197.2"/>
</dbReference>
<dbReference type="PDB" id="6PEM">
    <property type="method" value="EM"/>
    <property type="resolution" value="3.50 A"/>
    <property type="chains" value="0/1/2/3/4=1-224"/>
</dbReference>
<dbReference type="PDB" id="6PEP">
    <property type="method" value="EM"/>
    <property type="resolution" value="3.80 A"/>
    <property type="chains" value="0/1/2/3/4=1-224"/>
</dbReference>
<dbReference type="PDB" id="6Q14">
    <property type="method" value="EM"/>
    <property type="resolution" value="3.80 A"/>
    <property type="chains" value="0/1/2/3/4=1-224"/>
</dbReference>
<dbReference type="PDB" id="6Q15">
    <property type="method" value="EM"/>
    <property type="resolution" value="5.15 A"/>
    <property type="chains" value="0/1/2/3/4=1-224"/>
</dbReference>
<dbReference type="PDB" id="6Q16">
    <property type="method" value="EM"/>
    <property type="resolution" value="4.10 A"/>
    <property type="chains" value="0/1/2/3/4=1-224"/>
</dbReference>
<dbReference type="PDB" id="7AGX">
    <property type="method" value="EM"/>
    <property type="resolution" value="3.60 A"/>
    <property type="chains" value="1A/1B/1C/1D/1E=1-224"/>
</dbReference>
<dbReference type="PDB" id="7AH9">
    <property type="method" value="EM"/>
    <property type="resolution" value="3.30 A"/>
    <property type="chains" value="1A/1B/1C/1D/1E=1-224"/>
</dbReference>
<dbReference type="PDB" id="7AHI">
    <property type="method" value="EM"/>
    <property type="resolution" value="3.30 A"/>
    <property type="chains" value="1A/1B/1C/1D/1E=1-224"/>
</dbReference>
<dbReference type="PDBsum" id="6PEM"/>
<dbReference type="PDBsum" id="6PEP"/>
<dbReference type="PDBsum" id="6Q14"/>
<dbReference type="PDBsum" id="6Q15"/>
<dbReference type="PDBsum" id="6Q16"/>
<dbReference type="PDBsum" id="7AGX"/>
<dbReference type="PDBsum" id="7AH9"/>
<dbReference type="PDBsum" id="7AHI"/>
<dbReference type="EMDB" id="EMD-11780"/>
<dbReference type="EMDB" id="EMD-11781"/>
<dbReference type="EMDB" id="EMD-20556"/>
<dbReference type="SMR" id="P40700"/>
<dbReference type="DIP" id="DIP-59557N"/>
<dbReference type="IntAct" id="P40700">
    <property type="interactions" value="3"/>
</dbReference>
<dbReference type="STRING" id="99287.STM2890"/>
<dbReference type="TCDB" id="3.A.6.1.3">
    <property type="family name" value="the type iii (virulence-related) secretory pathway (iiisp) family"/>
</dbReference>
<dbReference type="PaxDb" id="99287-STM2890"/>
<dbReference type="GeneID" id="1254413"/>
<dbReference type="KEGG" id="stm:STM2890"/>
<dbReference type="PATRIC" id="fig|99287.12.peg.3046"/>
<dbReference type="HOGENOM" id="CLU_042028_2_0_6"/>
<dbReference type="OMA" id="MPVCQRI"/>
<dbReference type="PhylomeDB" id="P40700"/>
<dbReference type="BioCyc" id="SENT99287:STM2890-MONOMER"/>
<dbReference type="Proteomes" id="UP000001014">
    <property type="component" value="Chromosome"/>
</dbReference>
<dbReference type="GO" id="GO:0005886">
    <property type="term" value="C:plasma membrane"/>
    <property type="evidence" value="ECO:0000318"/>
    <property type="project" value="GO_Central"/>
</dbReference>
<dbReference type="GO" id="GO:0044780">
    <property type="term" value="P:bacterial-type flagellum assembly"/>
    <property type="evidence" value="ECO:0000318"/>
    <property type="project" value="GO_Central"/>
</dbReference>
<dbReference type="GO" id="GO:0071978">
    <property type="term" value="P:bacterial-type flagellum-dependent swarming motility"/>
    <property type="evidence" value="ECO:0000318"/>
    <property type="project" value="GO_Central"/>
</dbReference>
<dbReference type="GO" id="GO:0009306">
    <property type="term" value="P:protein secretion"/>
    <property type="evidence" value="ECO:0007669"/>
    <property type="project" value="InterPro"/>
</dbReference>
<dbReference type="InterPro" id="IPR005838">
    <property type="entry name" value="T3SS_IM_P"/>
</dbReference>
<dbReference type="InterPro" id="IPR005773">
    <property type="entry name" value="T3SS_YscR-like"/>
</dbReference>
<dbReference type="NCBIfam" id="NF009437">
    <property type="entry name" value="PRK12796.1"/>
    <property type="match status" value="1"/>
</dbReference>
<dbReference type="NCBIfam" id="NF009438">
    <property type="entry name" value="PRK12797.1"/>
    <property type="match status" value="1"/>
</dbReference>
<dbReference type="NCBIfam" id="TIGR01102">
    <property type="entry name" value="yscR"/>
    <property type="match status" value="1"/>
</dbReference>
<dbReference type="PANTHER" id="PTHR30587">
    <property type="entry name" value="FLAGELLAR BIOSYNTHETIC PROTEIN FLIP"/>
    <property type="match status" value="1"/>
</dbReference>
<dbReference type="PANTHER" id="PTHR30587:SF2">
    <property type="entry name" value="SURFACE PRESENTATION OF ANTIGENS PROTEIN SPAP"/>
    <property type="match status" value="1"/>
</dbReference>
<dbReference type="Pfam" id="PF00813">
    <property type="entry name" value="FliP"/>
    <property type="match status" value="1"/>
</dbReference>
<dbReference type="PRINTS" id="PR01302">
    <property type="entry name" value="TYPE3IMPPROT"/>
</dbReference>
<dbReference type="PROSITE" id="PS01060">
    <property type="entry name" value="FLIP_1"/>
    <property type="match status" value="1"/>
</dbReference>
<dbReference type="PROSITE" id="PS01061">
    <property type="entry name" value="FLIP_2"/>
    <property type="match status" value="1"/>
</dbReference>
<organism>
    <name type="scientific">Salmonella typhimurium (strain LT2 / SGSC1412 / ATCC 700720)</name>
    <dbReference type="NCBI Taxonomy" id="99287"/>
    <lineage>
        <taxon>Bacteria</taxon>
        <taxon>Pseudomonadati</taxon>
        <taxon>Pseudomonadota</taxon>
        <taxon>Gammaproteobacteria</taxon>
        <taxon>Enterobacterales</taxon>
        <taxon>Enterobacteriaceae</taxon>
        <taxon>Salmonella</taxon>
    </lineage>
</organism>
<sequence length="224" mass="25232">MGNDISLIALLAFSTLLPFIIASGTCFVKFSIVFVMVRNALGLQQIPSNMTLNGVALLLSMFVMWPIMHDAYVYFEDEDVTFNDISSLSKHVDEGLDGYRDYLIKYSDRELVQFFENAQLKRQYGEETETVKRDKDEIEKPSIFALLPAYALSEIKSAFKIGFYLYLPFVVVDLVVSSVLLALGMMMMSPVTISTPIKLVLFVALDGWTLLSKGLILQYMDIAT</sequence>
<reference key="1">
    <citation type="journal article" date="1993" name="EMBO J.">
        <title>Cognate gene clusters govern invasion of host epithelial cells by Salmonella typhimurium and Shigella flexneri.</title>
        <authorList>
            <person name="Groisman E.A."/>
            <person name="Ochman H."/>
        </authorList>
    </citation>
    <scope>NUCLEOTIDE SEQUENCE [GENOMIC DNA]</scope>
</reference>
<reference key="2">
    <citation type="journal article" date="2001" name="Nature">
        <title>Complete genome sequence of Salmonella enterica serovar Typhimurium LT2.</title>
        <authorList>
            <person name="McClelland M."/>
            <person name="Sanderson K.E."/>
            <person name="Spieth J."/>
            <person name="Clifton S.W."/>
            <person name="Latreille P."/>
            <person name="Courtney L."/>
            <person name="Porwollik S."/>
            <person name="Ali J."/>
            <person name="Dante M."/>
            <person name="Du F."/>
            <person name="Hou S."/>
            <person name="Layman D."/>
            <person name="Leonard S."/>
            <person name="Nguyen C."/>
            <person name="Scott K."/>
            <person name="Holmes A."/>
            <person name="Grewal N."/>
            <person name="Mulvaney E."/>
            <person name="Ryan E."/>
            <person name="Sun H."/>
            <person name="Florea L."/>
            <person name="Miller W."/>
            <person name="Stoneking T."/>
            <person name="Nhan M."/>
            <person name="Waterston R."/>
            <person name="Wilson R.K."/>
        </authorList>
    </citation>
    <scope>NUCLEOTIDE SEQUENCE [LARGE SCALE GENOMIC DNA]</scope>
    <source>
        <strain>LT2 / SGSC1412 / ATCC 700720</strain>
    </source>
</reference>
<proteinExistence type="evidence at protein level"/>
<keyword id="KW-0002">3D-structure</keyword>
<keyword id="KW-1003">Cell membrane</keyword>
<keyword id="KW-0472">Membrane</keyword>
<keyword id="KW-1185">Reference proteome</keyword>
<keyword id="KW-0812">Transmembrane</keyword>
<keyword id="KW-1133">Transmembrane helix</keyword>
<keyword id="KW-0843">Virulence</keyword>
<gene>
    <name type="primary">spaP</name>
    <name type="ordered locus">STM2890</name>
</gene>